<feature type="initiator methionine" description="Removed" evidence="2">
    <location>
        <position position="1"/>
    </location>
</feature>
<feature type="chain" id="PRO_0000067347" description="Fatty acid-binding protein, liver">
    <location>
        <begin position="2"/>
        <end position="126"/>
    </location>
</feature>
<feature type="modified residue" description="N-acetylalanine" evidence="1">
    <location>
        <position position="2"/>
    </location>
</feature>
<dbReference type="SMR" id="P81653"/>
<dbReference type="GO" id="GO:0005737">
    <property type="term" value="C:cytoplasm"/>
    <property type="evidence" value="ECO:0007669"/>
    <property type="project" value="UniProtKB-SubCell"/>
</dbReference>
<dbReference type="GO" id="GO:0008289">
    <property type="term" value="F:lipid binding"/>
    <property type="evidence" value="ECO:0007669"/>
    <property type="project" value="UniProtKB-KW"/>
</dbReference>
<dbReference type="Gene3D" id="2.40.128.20">
    <property type="match status" value="1"/>
</dbReference>
<dbReference type="InterPro" id="IPR012674">
    <property type="entry name" value="Calycin"/>
</dbReference>
<dbReference type="InterPro" id="IPR000463">
    <property type="entry name" value="Fatty_acid-bd"/>
</dbReference>
<dbReference type="InterPro" id="IPR031259">
    <property type="entry name" value="ILBP"/>
</dbReference>
<dbReference type="PANTHER" id="PTHR11955">
    <property type="entry name" value="FATTY ACID BINDING PROTEIN"/>
    <property type="match status" value="1"/>
</dbReference>
<dbReference type="Pfam" id="PF14651">
    <property type="entry name" value="Lipocalin_7"/>
    <property type="match status" value="1"/>
</dbReference>
<dbReference type="PRINTS" id="PR00178">
    <property type="entry name" value="FATTYACIDBP"/>
</dbReference>
<dbReference type="SUPFAM" id="SSF50814">
    <property type="entry name" value="Lipocalins"/>
    <property type="match status" value="1"/>
</dbReference>
<protein>
    <recommendedName>
        <fullName>Fatty acid-binding protein, liver</fullName>
    </recommendedName>
    <alternativeName>
        <fullName>Fatty acid-binding protein 1</fullName>
    </alternativeName>
    <alternativeName>
        <fullName>Liver-type fatty acid-binding protein</fullName>
        <shortName>L-FABP</shortName>
    </alternativeName>
</protein>
<proteinExistence type="evidence at protein level"/>
<organism>
    <name type="scientific">Schroederichthys bivius</name>
    <name type="common">Narrowmouthed catshark</name>
    <name type="synonym">Halaelurus bivius</name>
    <dbReference type="NCBI Taxonomy" id="458609"/>
    <lineage>
        <taxon>Eukaryota</taxon>
        <taxon>Metazoa</taxon>
        <taxon>Chordata</taxon>
        <taxon>Craniata</taxon>
        <taxon>Vertebrata</taxon>
        <taxon>Chondrichthyes</taxon>
        <taxon>Elasmobranchii</taxon>
        <taxon>Galeomorphii</taxon>
        <taxon>Galeoidea</taxon>
        <taxon>Carcharhiniformes</taxon>
        <taxon>Scyliorhinidae</taxon>
        <taxon>Schroederichthys</taxon>
    </lineage>
</organism>
<reference key="1">
    <citation type="journal article" date="1999" name="Eur. J. Biochem.">
        <title>The main fatty acid-binding protein in the liver of the shark (Halaetunus bivius) belongs to the liver basic type. Isolation, amino acid sequence determination and characterization.</title>
        <authorList>
            <person name="Cordoba O.L."/>
            <person name="Sanchez E.I."/>
            <person name="Santome J.A."/>
        </authorList>
    </citation>
    <scope>PROTEIN SEQUENCE OF 2-126</scope>
    <source>
        <tissue>Liver</tissue>
    </source>
</reference>
<evidence type="ECO:0000250" key="1"/>
<evidence type="ECO:0000269" key="2">
    <source>
    </source>
</evidence>
<evidence type="ECO:0000305" key="3"/>
<comment type="function">
    <text evidence="1">Binds free fatty acids and their coenzyme A derivatives, bilirubin, and some other small molecules in the cytoplasm. May be involved in intracellular lipid transport (By similarity).</text>
</comment>
<comment type="subcellular location">
    <subcellularLocation>
        <location evidence="1">Cytoplasm</location>
    </subcellularLocation>
</comment>
<comment type="domain">
    <text evidence="1">Forms a beta-barrel structure that accommodates hydrophobic ligands in its interior.</text>
</comment>
<comment type="similarity">
    <text evidence="3">Belongs to the calycin superfamily. Fatty-acid binding protein (FABP) family.</text>
</comment>
<accession>P81653</accession>
<sequence>MAFSGTWQVYSQENIEDFLRALSLPEEVIKIGKDIKPVIDIKQTGEHFVIVVKTSQQTVTNEFTVGKEAEITSMDGKKLKCTVQLEDGKLVAKKLKFTHIQEVQGNEMIEKLTAGNATMIRKSRRM</sequence>
<keyword id="KW-0007">Acetylation</keyword>
<keyword id="KW-0963">Cytoplasm</keyword>
<keyword id="KW-0903">Direct protein sequencing</keyword>
<keyword id="KW-0446">Lipid-binding</keyword>
<keyword id="KW-0813">Transport</keyword>
<name>FABPL_SCHBI</name>
<gene>
    <name type="primary">fabp1</name>
</gene>